<organism>
    <name type="scientific">Chaetosphaeridium globosum</name>
    <name type="common">Charophycean green alga</name>
    <name type="synonym">Herposteiron globosum</name>
    <dbReference type="NCBI Taxonomy" id="96477"/>
    <lineage>
        <taxon>Eukaryota</taxon>
        <taxon>Viridiplantae</taxon>
        <taxon>Streptophyta</taxon>
        <taxon>Coleochaetophyceae</taxon>
        <taxon>Coleochaetales</taxon>
        <taxon>Chaetosphaeridiaceae</taxon>
        <taxon>Chaetosphaeridium</taxon>
    </lineage>
</organism>
<name>RK14_CHAGL</name>
<protein>
    <recommendedName>
        <fullName evidence="1">Large ribosomal subunit protein uL14c</fullName>
    </recommendedName>
    <alternativeName>
        <fullName evidence="2">50S ribosomal protein L14, chloroplastic</fullName>
    </alternativeName>
</protein>
<reference key="1">
    <citation type="journal article" date="2002" name="Proc. Natl. Acad. Sci. U.S.A.">
        <title>The chloroplast and mitochondrial genome sequences of the charophyte Chaetosphaeridium globosum: insights into the timing of the events that restructured organelle DNAs within the green algal lineage that led to land plants.</title>
        <authorList>
            <person name="Turmel M."/>
            <person name="Otis C."/>
            <person name="Lemieux C."/>
        </authorList>
    </citation>
    <scope>NUCLEOTIDE SEQUENCE [LARGE SCALE GENOMIC DNA]</scope>
    <source>
        <strain>M1311</strain>
    </source>
</reference>
<feature type="chain" id="PRO_0000276337" description="Large ribosomal subunit protein uL14c">
    <location>
        <begin position="1"/>
        <end position="122"/>
    </location>
</feature>
<dbReference type="EMBL" id="AF494278">
    <property type="protein sequence ID" value="AAM96554.1"/>
    <property type="molecule type" value="Genomic_DNA"/>
</dbReference>
<dbReference type="RefSeq" id="NP_683838.1">
    <property type="nucleotide sequence ID" value="NC_004115.1"/>
</dbReference>
<dbReference type="SMR" id="Q8M9V2"/>
<dbReference type="GeneID" id="860710"/>
<dbReference type="GO" id="GO:0009507">
    <property type="term" value="C:chloroplast"/>
    <property type="evidence" value="ECO:0007669"/>
    <property type="project" value="UniProtKB-SubCell"/>
</dbReference>
<dbReference type="GO" id="GO:0022625">
    <property type="term" value="C:cytosolic large ribosomal subunit"/>
    <property type="evidence" value="ECO:0007669"/>
    <property type="project" value="TreeGrafter"/>
</dbReference>
<dbReference type="GO" id="GO:0070180">
    <property type="term" value="F:large ribosomal subunit rRNA binding"/>
    <property type="evidence" value="ECO:0007669"/>
    <property type="project" value="TreeGrafter"/>
</dbReference>
<dbReference type="GO" id="GO:0003735">
    <property type="term" value="F:structural constituent of ribosome"/>
    <property type="evidence" value="ECO:0007669"/>
    <property type="project" value="InterPro"/>
</dbReference>
<dbReference type="GO" id="GO:0006412">
    <property type="term" value="P:translation"/>
    <property type="evidence" value="ECO:0007669"/>
    <property type="project" value="UniProtKB-UniRule"/>
</dbReference>
<dbReference type="CDD" id="cd00337">
    <property type="entry name" value="Ribosomal_uL14"/>
    <property type="match status" value="1"/>
</dbReference>
<dbReference type="FunFam" id="2.40.150.20:FF:000001">
    <property type="entry name" value="50S ribosomal protein L14"/>
    <property type="match status" value="1"/>
</dbReference>
<dbReference type="Gene3D" id="2.40.150.20">
    <property type="entry name" value="Ribosomal protein L14"/>
    <property type="match status" value="1"/>
</dbReference>
<dbReference type="HAMAP" id="MF_01367">
    <property type="entry name" value="Ribosomal_uL14"/>
    <property type="match status" value="1"/>
</dbReference>
<dbReference type="InterPro" id="IPR000218">
    <property type="entry name" value="Ribosomal_uL14"/>
</dbReference>
<dbReference type="InterPro" id="IPR005745">
    <property type="entry name" value="Ribosomal_uL14_bac-type"/>
</dbReference>
<dbReference type="InterPro" id="IPR019972">
    <property type="entry name" value="Ribosomal_uL14_CS"/>
</dbReference>
<dbReference type="InterPro" id="IPR036853">
    <property type="entry name" value="Ribosomal_uL14_sf"/>
</dbReference>
<dbReference type="NCBIfam" id="TIGR01067">
    <property type="entry name" value="rplN_bact"/>
    <property type="match status" value="1"/>
</dbReference>
<dbReference type="PANTHER" id="PTHR11761">
    <property type="entry name" value="50S/60S RIBOSOMAL PROTEIN L14/L23"/>
    <property type="match status" value="1"/>
</dbReference>
<dbReference type="PANTHER" id="PTHR11761:SF3">
    <property type="entry name" value="LARGE RIBOSOMAL SUBUNIT PROTEIN UL14M"/>
    <property type="match status" value="1"/>
</dbReference>
<dbReference type="Pfam" id="PF00238">
    <property type="entry name" value="Ribosomal_L14"/>
    <property type="match status" value="1"/>
</dbReference>
<dbReference type="SMART" id="SM01374">
    <property type="entry name" value="Ribosomal_L14"/>
    <property type="match status" value="1"/>
</dbReference>
<dbReference type="SUPFAM" id="SSF50193">
    <property type="entry name" value="Ribosomal protein L14"/>
    <property type="match status" value="1"/>
</dbReference>
<dbReference type="PROSITE" id="PS00049">
    <property type="entry name" value="RIBOSOMAL_L14"/>
    <property type="match status" value="1"/>
</dbReference>
<geneLocation type="chloroplast"/>
<accession>Q8M9V2</accession>
<proteinExistence type="inferred from homology"/>
<sequence length="122" mass="13474">MIQPQSYLNVADNSGARKIMCIRILGGSNKKYGHIGDTIIGVVKEAIPNMTLKKSEVVRAVIVRTCKELKRKNGTILRFDENAAVIINQEGNPRGTRIFGPVARELREANFTKIVSLAPEVL</sequence>
<comment type="function">
    <text evidence="1">Binds to 23S rRNA.</text>
</comment>
<comment type="subunit">
    <text evidence="1">Part of the 50S ribosomal subunit.</text>
</comment>
<comment type="subcellular location">
    <subcellularLocation>
        <location>Plastid</location>
        <location>Chloroplast</location>
    </subcellularLocation>
</comment>
<comment type="similarity">
    <text evidence="1">Belongs to the universal ribosomal protein uL14 family.</text>
</comment>
<gene>
    <name evidence="1" type="primary">rpl14</name>
</gene>
<keyword id="KW-0150">Chloroplast</keyword>
<keyword id="KW-0934">Plastid</keyword>
<keyword id="KW-0687">Ribonucleoprotein</keyword>
<keyword id="KW-0689">Ribosomal protein</keyword>
<keyword id="KW-0694">RNA-binding</keyword>
<keyword id="KW-0699">rRNA-binding</keyword>
<evidence type="ECO:0000255" key="1">
    <source>
        <dbReference type="HAMAP-Rule" id="MF_01367"/>
    </source>
</evidence>
<evidence type="ECO:0000305" key="2"/>